<protein>
    <recommendedName>
        <fullName>Proteasome subunit alpha type-7</fullName>
    </recommendedName>
    <alternativeName>
        <fullName>20S proteasome subunit alpha-4</fullName>
    </alternativeName>
</protein>
<sequence length="247" mass="27865">MSYDRAITVFSPDGHLFQVEYAQEAVRKGLCAVGVKGKDSIIFAVEKKSVQKLQDSRTTRKIYKLDEHIYLASAGLSADARVVVNHAQLECQRFRLSYEDAIDVDLLVRYVARVQQRSTQSSGSRPYGVSTIIGGFNENGQPQLWKTEPSGTSSAWNAAAIGRNDKVVLEFMEKNYQDGMTRDRCVHFAIKALLEAVESGSKNIELLVLERGKAAYMSDTELHRFVVEVEKEREEEAARRRRLAEED</sequence>
<name>PSA7_TRYBB</name>
<gene>
    <name type="primary">PSA4</name>
</gene>
<organism>
    <name type="scientific">Trypanosoma brucei brucei</name>
    <dbReference type="NCBI Taxonomy" id="5702"/>
    <lineage>
        <taxon>Eukaryota</taxon>
        <taxon>Discoba</taxon>
        <taxon>Euglenozoa</taxon>
        <taxon>Kinetoplastea</taxon>
        <taxon>Metakinetoplastina</taxon>
        <taxon>Trypanosomatida</taxon>
        <taxon>Trypanosomatidae</taxon>
        <taxon>Trypanosoma</taxon>
    </lineage>
</organism>
<keyword id="KW-0963">Cytoplasm</keyword>
<keyword id="KW-0539">Nucleus</keyword>
<keyword id="KW-0647">Proteasome</keyword>
<accession>Q9NDA2</accession>
<feature type="chain" id="PRO_0000124158" description="Proteasome subunit alpha type-7">
    <location>
        <begin position="1"/>
        <end position="247"/>
    </location>
</feature>
<comment type="function">
    <text>The proteasome is a multicatalytic proteinase complex which is characterized by its ability to cleave peptides with Arg, Phe, Tyr, Leu, and Glu adjacent to the leaving group at neutral or slightly basic pH. The proteasome has an ATP-dependent proteolytic activity.</text>
</comment>
<comment type="subunit">
    <text evidence="1">The 26S proteasome consists of a 20S proteasome core and two 19S regulatory subunits. The 20S proteasome core is composed of 28 subunits that are arranged in four stacked rings, resulting in a barrel-shaped structure. The two end rings are each formed by seven alpha subunits, and the two central rings are each formed by seven beta subunits. The catalytic chamber with the active sites is on the inside of the barrel (By similarity).</text>
</comment>
<comment type="subcellular location">
    <subcellularLocation>
        <location evidence="1">Cytoplasm</location>
    </subcellularLocation>
    <subcellularLocation>
        <location evidence="1">Nucleus</location>
    </subcellularLocation>
</comment>
<comment type="similarity">
    <text evidence="2">Belongs to the peptidase T1A family.</text>
</comment>
<proteinExistence type="evidence at transcript level"/>
<dbReference type="EMBL" id="AF169652">
    <property type="protein sequence ID" value="AAF89684.1"/>
    <property type="molecule type" value="mRNA"/>
</dbReference>
<dbReference type="SMR" id="Q9NDA2"/>
<dbReference type="MEROPS" id="T01.974"/>
<dbReference type="BRENDA" id="3.4.25.1">
    <property type="organism ID" value="6519"/>
</dbReference>
<dbReference type="GO" id="GO:0005737">
    <property type="term" value="C:cytoplasm"/>
    <property type="evidence" value="ECO:0000314"/>
    <property type="project" value="GeneDB"/>
</dbReference>
<dbReference type="GO" id="GO:0005829">
    <property type="term" value="C:cytosol"/>
    <property type="evidence" value="ECO:0000247"/>
    <property type="project" value="GeneDB"/>
</dbReference>
<dbReference type="GO" id="GO:0005730">
    <property type="term" value="C:nucleolus"/>
    <property type="evidence" value="ECO:0000314"/>
    <property type="project" value="GeneDB"/>
</dbReference>
<dbReference type="GO" id="GO:0005654">
    <property type="term" value="C:nucleoplasm"/>
    <property type="evidence" value="ECO:0000314"/>
    <property type="project" value="GeneDB"/>
</dbReference>
<dbReference type="GO" id="GO:0005634">
    <property type="term" value="C:nucleus"/>
    <property type="evidence" value="ECO:0000247"/>
    <property type="project" value="GeneDB"/>
</dbReference>
<dbReference type="GO" id="GO:0005839">
    <property type="term" value="C:proteasome core complex"/>
    <property type="evidence" value="ECO:0000255"/>
    <property type="project" value="GeneDB"/>
</dbReference>
<dbReference type="GO" id="GO:0019773">
    <property type="term" value="C:proteasome core complex, alpha-subunit complex"/>
    <property type="evidence" value="ECO:0000250"/>
    <property type="project" value="UniProtKB"/>
</dbReference>
<dbReference type="GO" id="GO:0006511">
    <property type="term" value="P:ubiquitin-dependent protein catabolic process"/>
    <property type="evidence" value="ECO:0000255"/>
    <property type="project" value="GeneDB"/>
</dbReference>
<dbReference type="CDD" id="cd03755">
    <property type="entry name" value="proteasome_alpha_type_7"/>
    <property type="match status" value="1"/>
</dbReference>
<dbReference type="FunFam" id="3.60.20.10:FF:000004">
    <property type="entry name" value="Proteasome subunit alpha type-4"/>
    <property type="match status" value="1"/>
</dbReference>
<dbReference type="Gene3D" id="3.60.20.10">
    <property type="entry name" value="Glutamine Phosphoribosylpyrophosphate, subunit 1, domain 1"/>
    <property type="match status" value="1"/>
</dbReference>
<dbReference type="InterPro" id="IPR029055">
    <property type="entry name" value="Ntn_hydrolases_N"/>
</dbReference>
<dbReference type="InterPro" id="IPR050115">
    <property type="entry name" value="Proteasome_alpha"/>
</dbReference>
<dbReference type="InterPro" id="IPR023332">
    <property type="entry name" value="Proteasome_alpha-type"/>
</dbReference>
<dbReference type="InterPro" id="IPR000426">
    <property type="entry name" value="Proteasome_asu_N"/>
</dbReference>
<dbReference type="InterPro" id="IPR001353">
    <property type="entry name" value="Proteasome_sua/b"/>
</dbReference>
<dbReference type="NCBIfam" id="NF003075">
    <property type="entry name" value="PRK03996.1"/>
    <property type="match status" value="1"/>
</dbReference>
<dbReference type="PANTHER" id="PTHR11599">
    <property type="entry name" value="PROTEASOME SUBUNIT ALPHA/BETA"/>
    <property type="match status" value="1"/>
</dbReference>
<dbReference type="Pfam" id="PF00227">
    <property type="entry name" value="Proteasome"/>
    <property type="match status" value="1"/>
</dbReference>
<dbReference type="Pfam" id="PF10584">
    <property type="entry name" value="Proteasome_A_N"/>
    <property type="match status" value="1"/>
</dbReference>
<dbReference type="SMART" id="SM00948">
    <property type="entry name" value="Proteasome_A_N"/>
    <property type="match status" value="1"/>
</dbReference>
<dbReference type="SUPFAM" id="SSF56235">
    <property type="entry name" value="N-terminal nucleophile aminohydrolases (Ntn hydrolases)"/>
    <property type="match status" value="1"/>
</dbReference>
<dbReference type="PROSITE" id="PS00388">
    <property type="entry name" value="PROTEASOME_ALPHA_1"/>
    <property type="match status" value="1"/>
</dbReference>
<dbReference type="PROSITE" id="PS51475">
    <property type="entry name" value="PROTEASOME_ALPHA_2"/>
    <property type="match status" value="1"/>
</dbReference>
<reference key="1">
    <citation type="journal article" date="2001" name="J. Biol. Chem.">
        <title>Functional assignment of the 20 S proteasome from Trypanosoma brucei using mass spectrometry and new bioinformatics approaches.</title>
        <authorList>
            <person name="Huang L."/>
            <person name="Jacob R.J."/>
            <person name="Pegg S.C.H."/>
            <person name="Baldwin M.A."/>
            <person name="Wang C.C."/>
            <person name="Burlingame A.L."/>
            <person name="Babbitt P.C."/>
        </authorList>
    </citation>
    <scope>NUCLEOTIDE SEQUENCE [MRNA]</scope>
    <source>
        <strain>427</strain>
    </source>
</reference>
<evidence type="ECO:0000250" key="1"/>
<evidence type="ECO:0000255" key="2">
    <source>
        <dbReference type="PROSITE-ProRule" id="PRU00808"/>
    </source>
</evidence>